<dbReference type="EC" id="4.1.2.40" evidence="1"/>
<dbReference type="EMBL" id="CP000026">
    <property type="protein sequence ID" value="AAV78951.1"/>
    <property type="molecule type" value="Genomic_DNA"/>
</dbReference>
<dbReference type="RefSeq" id="WP_000469983.1">
    <property type="nucleotide sequence ID" value="NC_006511.1"/>
</dbReference>
<dbReference type="SMR" id="Q5PL86"/>
<dbReference type="KEGG" id="spt:SPA3122"/>
<dbReference type="HOGENOM" id="CLU_040088_0_1_6"/>
<dbReference type="UniPathway" id="UPA00704">
    <property type="reaction ID" value="UER00716"/>
</dbReference>
<dbReference type="Proteomes" id="UP000008185">
    <property type="component" value="Chromosome"/>
</dbReference>
<dbReference type="GO" id="GO:0005829">
    <property type="term" value="C:cytosol"/>
    <property type="evidence" value="ECO:0007669"/>
    <property type="project" value="TreeGrafter"/>
</dbReference>
<dbReference type="GO" id="GO:0009025">
    <property type="term" value="F:tagatose-bisphosphate aldolase activity"/>
    <property type="evidence" value="ECO:0007669"/>
    <property type="project" value="UniProtKB-UniRule"/>
</dbReference>
<dbReference type="GO" id="GO:0008270">
    <property type="term" value="F:zinc ion binding"/>
    <property type="evidence" value="ECO:0007669"/>
    <property type="project" value="UniProtKB-UniRule"/>
</dbReference>
<dbReference type="GO" id="GO:2001059">
    <property type="term" value="P:D-tagatose 6-phosphate catabolic process"/>
    <property type="evidence" value="ECO:0007669"/>
    <property type="project" value="UniProtKB-UniRule"/>
</dbReference>
<dbReference type="GO" id="GO:0019404">
    <property type="term" value="P:galactitol catabolic process"/>
    <property type="evidence" value="ECO:0007669"/>
    <property type="project" value="InterPro"/>
</dbReference>
<dbReference type="CDD" id="cd00947">
    <property type="entry name" value="TBP_aldolase_IIB"/>
    <property type="match status" value="1"/>
</dbReference>
<dbReference type="FunFam" id="3.20.20.70:FF:000043">
    <property type="entry name" value="D-tagatose-1,6-bisphosphate aldolase subunit GatY"/>
    <property type="match status" value="1"/>
</dbReference>
<dbReference type="Gene3D" id="3.20.20.70">
    <property type="entry name" value="Aldolase class I"/>
    <property type="match status" value="1"/>
</dbReference>
<dbReference type="HAMAP" id="MF_01294">
    <property type="entry name" value="TagBP_aldolase_GatY"/>
    <property type="match status" value="1"/>
</dbReference>
<dbReference type="InterPro" id="IPR013785">
    <property type="entry name" value="Aldolase_TIM"/>
</dbReference>
<dbReference type="InterPro" id="IPR050246">
    <property type="entry name" value="Class_II_FBP_aldolase"/>
</dbReference>
<dbReference type="InterPro" id="IPR000771">
    <property type="entry name" value="FBA_II"/>
</dbReference>
<dbReference type="InterPro" id="IPR011288">
    <property type="entry name" value="TagBP_ald_KbaY/GatY"/>
</dbReference>
<dbReference type="InterPro" id="IPR023955">
    <property type="entry name" value="TagBP_aldolase_GatY"/>
</dbReference>
<dbReference type="NCBIfam" id="TIGR00167">
    <property type="entry name" value="cbbA"/>
    <property type="match status" value="1"/>
</dbReference>
<dbReference type="NCBIfam" id="NF006626">
    <property type="entry name" value="PRK09195.1"/>
    <property type="match status" value="1"/>
</dbReference>
<dbReference type="NCBIfam" id="NF009374">
    <property type="entry name" value="PRK12737.1"/>
    <property type="match status" value="1"/>
</dbReference>
<dbReference type="NCBIfam" id="TIGR01858">
    <property type="entry name" value="tag_bisphos_ald"/>
    <property type="match status" value="1"/>
</dbReference>
<dbReference type="PANTHER" id="PTHR30304">
    <property type="entry name" value="D-TAGATOSE-1,6-BISPHOSPHATE ALDOLASE"/>
    <property type="match status" value="1"/>
</dbReference>
<dbReference type="PANTHER" id="PTHR30304:SF0">
    <property type="entry name" value="D-TAGATOSE-1,6-BISPHOSPHATE ALDOLASE SUBUNIT GATY-RELATED"/>
    <property type="match status" value="1"/>
</dbReference>
<dbReference type="Pfam" id="PF01116">
    <property type="entry name" value="F_bP_aldolase"/>
    <property type="match status" value="1"/>
</dbReference>
<dbReference type="PIRSF" id="PIRSF001359">
    <property type="entry name" value="F_bP_aldolase_II"/>
    <property type="match status" value="1"/>
</dbReference>
<dbReference type="SUPFAM" id="SSF51569">
    <property type="entry name" value="Aldolase"/>
    <property type="match status" value="1"/>
</dbReference>
<dbReference type="PROSITE" id="PS00602">
    <property type="entry name" value="ALDOLASE_CLASS_II_1"/>
    <property type="match status" value="1"/>
</dbReference>
<dbReference type="PROSITE" id="PS00806">
    <property type="entry name" value="ALDOLASE_CLASS_II_2"/>
    <property type="match status" value="1"/>
</dbReference>
<accession>Q5PL86</accession>
<organism>
    <name type="scientific">Salmonella paratyphi A (strain ATCC 9150 / SARB42)</name>
    <dbReference type="NCBI Taxonomy" id="295319"/>
    <lineage>
        <taxon>Bacteria</taxon>
        <taxon>Pseudomonadati</taxon>
        <taxon>Pseudomonadota</taxon>
        <taxon>Gammaproteobacteria</taxon>
        <taxon>Enterobacterales</taxon>
        <taxon>Enterobacteriaceae</taxon>
        <taxon>Salmonella</taxon>
    </lineage>
</organism>
<comment type="function">
    <text evidence="1">Catalytic subunit of the tagatose-1,6-bisphosphate aldolase GatYZ, which catalyzes the reversible aldol condensation of dihydroxyacetone phosphate (DHAP or glycerone-phosphate) with glyceraldehyde 3-phosphate (G3P) to produce tagatose 1,6-bisphosphate (TBP). Requires GatZ subunit for full activity and stability. Is involved in the catabolism of galactitol.</text>
</comment>
<comment type="catalytic activity">
    <reaction evidence="1">
        <text>D-tagatofuranose 1,6-bisphosphate = D-glyceraldehyde 3-phosphate + dihydroxyacetone phosphate</text>
        <dbReference type="Rhea" id="RHEA:22948"/>
        <dbReference type="ChEBI" id="CHEBI:57642"/>
        <dbReference type="ChEBI" id="CHEBI:58694"/>
        <dbReference type="ChEBI" id="CHEBI:59776"/>
        <dbReference type="EC" id="4.1.2.40"/>
    </reaction>
</comment>
<comment type="cofactor">
    <cofactor evidence="1">
        <name>Zn(2+)</name>
        <dbReference type="ChEBI" id="CHEBI:29105"/>
    </cofactor>
    <text evidence="1">Binds 1 zinc ion per subunit.</text>
</comment>
<comment type="pathway">
    <text evidence="1">Carbohydrate metabolism; D-tagatose 6-phosphate degradation; D-glyceraldehyde 3-phosphate and glycerone phosphate from D-tagatose 6-phosphate: step 2/2.</text>
</comment>
<comment type="subunit">
    <text evidence="1">Forms a complex with GatZ.</text>
</comment>
<comment type="similarity">
    <text evidence="1">Belongs to the class II fructose-bisphosphate aldolase family. TagBP aldolase GatY subfamily.</text>
</comment>
<sequence>MFIISSKNMLQKAQHAGYAVPAFNIHNLETLQVVVETAAEMRSPLIVAGTPGTFSYAGMGNIVAIAGDLAREYNLPLAIHLDHHESLADIESKVMAGIRSVMIDGSHFPFEENVALVKSVVDFCHRYDTSVEAELGRLGGIEDDLVVDSKDALYTNPQQAREFVARTGIDSLAVAIGTAHCMYAAEPKLDFERLAEIRALVDIPLVLHGASGLPESDIRQAISLGVCKVNVATELKIAFSDALKEYFLQNPKANDPRHYMQPAKQAMKEVVRKVIHVCGCEGQL</sequence>
<reference key="1">
    <citation type="journal article" date="2004" name="Nat. Genet.">
        <title>Comparison of genome degradation in Paratyphi A and Typhi, human-restricted serovars of Salmonella enterica that cause typhoid.</title>
        <authorList>
            <person name="McClelland M."/>
            <person name="Sanderson K.E."/>
            <person name="Clifton S.W."/>
            <person name="Latreille P."/>
            <person name="Porwollik S."/>
            <person name="Sabo A."/>
            <person name="Meyer R."/>
            <person name="Bieri T."/>
            <person name="Ozersky P."/>
            <person name="McLellan M."/>
            <person name="Harkins C.R."/>
            <person name="Wang C."/>
            <person name="Nguyen C."/>
            <person name="Berghoff A."/>
            <person name="Elliott G."/>
            <person name="Kohlberg S."/>
            <person name="Strong C."/>
            <person name="Du F."/>
            <person name="Carter J."/>
            <person name="Kremizki C."/>
            <person name="Layman D."/>
            <person name="Leonard S."/>
            <person name="Sun H."/>
            <person name="Fulton L."/>
            <person name="Nash W."/>
            <person name="Miner T."/>
            <person name="Minx P."/>
            <person name="Delehaunty K."/>
            <person name="Fronick C."/>
            <person name="Magrini V."/>
            <person name="Nhan M."/>
            <person name="Warren W."/>
            <person name="Florea L."/>
            <person name="Spieth J."/>
            <person name="Wilson R.K."/>
        </authorList>
    </citation>
    <scope>NUCLEOTIDE SEQUENCE [LARGE SCALE GENOMIC DNA]</scope>
    <source>
        <strain>ATCC 9150 / SARB42</strain>
    </source>
</reference>
<gene>
    <name evidence="1" type="primary">gatY</name>
    <name type="ordered locus">SPA3122</name>
</gene>
<protein>
    <recommendedName>
        <fullName evidence="1">D-tagatose-1,6-bisphosphate aldolase subunit GatY</fullName>
        <shortName evidence="1">TBPA</shortName>
        <shortName evidence="1">TagBP aldolase</shortName>
        <ecNumber evidence="1">4.1.2.40</ecNumber>
    </recommendedName>
    <alternativeName>
        <fullName evidence="1">D-tagatose-bisphosphate aldolase class II</fullName>
    </alternativeName>
    <alternativeName>
        <fullName evidence="1">Tagatose-bisphosphate aldolase</fullName>
    </alternativeName>
</protein>
<feature type="chain" id="PRO_0000355348" description="D-tagatose-1,6-bisphosphate aldolase subunit GatY">
    <location>
        <begin position="1"/>
        <end position="284"/>
    </location>
</feature>
<feature type="active site" description="Proton donor" evidence="1">
    <location>
        <position position="82"/>
    </location>
</feature>
<feature type="binding site" evidence="1">
    <location>
        <position position="83"/>
    </location>
    <ligand>
        <name>Zn(2+)</name>
        <dbReference type="ChEBI" id="CHEBI:29105"/>
        <note>catalytic</note>
    </ligand>
</feature>
<feature type="binding site" evidence="1">
    <location>
        <position position="180"/>
    </location>
    <ligand>
        <name>Zn(2+)</name>
        <dbReference type="ChEBI" id="CHEBI:29105"/>
        <note>catalytic</note>
    </ligand>
</feature>
<feature type="binding site" evidence="1">
    <location>
        <position position="181"/>
    </location>
    <ligand>
        <name>dihydroxyacetone phosphate</name>
        <dbReference type="ChEBI" id="CHEBI:57642"/>
    </ligand>
</feature>
<feature type="binding site" evidence="1">
    <location>
        <position position="208"/>
    </location>
    <ligand>
        <name>Zn(2+)</name>
        <dbReference type="ChEBI" id="CHEBI:29105"/>
        <note>catalytic</note>
    </ligand>
</feature>
<feature type="binding site" evidence="1">
    <location>
        <begin position="209"/>
        <end position="211"/>
    </location>
    <ligand>
        <name>dihydroxyacetone phosphate</name>
        <dbReference type="ChEBI" id="CHEBI:57642"/>
    </ligand>
</feature>
<feature type="binding site" evidence="1">
    <location>
        <begin position="230"/>
        <end position="233"/>
    </location>
    <ligand>
        <name>dihydroxyacetone phosphate</name>
        <dbReference type="ChEBI" id="CHEBI:57642"/>
    </ligand>
</feature>
<keyword id="KW-0298">Galactitol metabolism</keyword>
<keyword id="KW-0456">Lyase</keyword>
<keyword id="KW-0479">Metal-binding</keyword>
<keyword id="KW-0862">Zinc</keyword>
<evidence type="ECO:0000255" key="1">
    <source>
        <dbReference type="HAMAP-Rule" id="MF_01294"/>
    </source>
</evidence>
<name>GATY_SALPA</name>
<proteinExistence type="inferred from homology"/>